<name>EX7L_BRUME</name>
<gene>
    <name evidence="1" type="primary">xseA</name>
    <name type="ordered locus">BMEII0527</name>
</gene>
<organism>
    <name type="scientific">Brucella melitensis biotype 1 (strain ATCC 23456 / CCUG 17765 / NCTC 10094 / 16M)</name>
    <dbReference type="NCBI Taxonomy" id="224914"/>
    <lineage>
        <taxon>Bacteria</taxon>
        <taxon>Pseudomonadati</taxon>
        <taxon>Pseudomonadota</taxon>
        <taxon>Alphaproteobacteria</taxon>
        <taxon>Hyphomicrobiales</taxon>
        <taxon>Brucellaceae</taxon>
        <taxon>Brucella/Ochrobactrum group</taxon>
        <taxon>Brucella</taxon>
    </lineage>
</organism>
<comment type="function">
    <text evidence="1">Bidirectionally degrades single-stranded DNA into large acid-insoluble oligonucleotides, which are then degraded further into small acid-soluble oligonucleotides.</text>
</comment>
<comment type="catalytic activity">
    <reaction evidence="1">
        <text>Exonucleolytic cleavage in either 5'- to 3'- or 3'- to 5'-direction to yield nucleoside 5'-phosphates.</text>
        <dbReference type="EC" id="3.1.11.6"/>
    </reaction>
</comment>
<comment type="subunit">
    <text evidence="1">Heterooligomer composed of large and small subunits.</text>
</comment>
<comment type="subcellular location">
    <subcellularLocation>
        <location evidence="1">Cytoplasm</location>
    </subcellularLocation>
</comment>
<comment type="similarity">
    <text evidence="1">Belongs to the XseA family.</text>
</comment>
<comment type="sequence caution" evidence="2">
    <conflict type="erroneous initiation">
        <sequence resource="EMBL-CDS" id="AAL53769"/>
    </conflict>
</comment>
<dbReference type="EC" id="3.1.11.6" evidence="1"/>
<dbReference type="EMBL" id="AE008918">
    <property type="protein sequence ID" value="AAL53769.1"/>
    <property type="status" value="ALT_INIT"/>
    <property type="molecule type" value="Genomic_DNA"/>
</dbReference>
<dbReference type="PIR" id="AF3575">
    <property type="entry name" value="AF3575"/>
</dbReference>
<dbReference type="SMR" id="Q8YCK1"/>
<dbReference type="KEGG" id="bme:BMEII0527"/>
<dbReference type="KEGG" id="bmel:DK63_2717"/>
<dbReference type="PATRIC" id="fig|224914.52.peg.2846"/>
<dbReference type="eggNOG" id="COG1570">
    <property type="taxonomic scope" value="Bacteria"/>
</dbReference>
<dbReference type="PhylomeDB" id="Q8YCK1"/>
<dbReference type="PRO" id="PR:Q8YCK1"/>
<dbReference type="Proteomes" id="UP000000419">
    <property type="component" value="Chromosome II"/>
</dbReference>
<dbReference type="GO" id="GO:0005737">
    <property type="term" value="C:cytoplasm"/>
    <property type="evidence" value="ECO:0007669"/>
    <property type="project" value="UniProtKB-SubCell"/>
</dbReference>
<dbReference type="GO" id="GO:0009318">
    <property type="term" value="C:exodeoxyribonuclease VII complex"/>
    <property type="evidence" value="ECO:0007669"/>
    <property type="project" value="InterPro"/>
</dbReference>
<dbReference type="GO" id="GO:0008855">
    <property type="term" value="F:exodeoxyribonuclease VII activity"/>
    <property type="evidence" value="ECO:0007669"/>
    <property type="project" value="UniProtKB-UniRule"/>
</dbReference>
<dbReference type="GO" id="GO:0003676">
    <property type="term" value="F:nucleic acid binding"/>
    <property type="evidence" value="ECO:0007669"/>
    <property type="project" value="InterPro"/>
</dbReference>
<dbReference type="GO" id="GO:0006308">
    <property type="term" value="P:DNA catabolic process"/>
    <property type="evidence" value="ECO:0007669"/>
    <property type="project" value="UniProtKB-UniRule"/>
</dbReference>
<dbReference type="CDD" id="cd04489">
    <property type="entry name" value="ExoVII_LU_OBF"/>
    <property type="match status" value="1"/>
</dbReference>
<dbReference type="HAMAP" id="MF_00378">
    <property type="entry name" value="Exonuc_7_L"/>
    <property type="match status" value="1"/>
</dbReference>
<dbReference type="InterPro" id="IPR003753">
    <property type="entry name" value="Exonuc_VII_L"/>
</dbReference>
<dbReference type="InterPro" id="IPR020579">
    <property type="entry name" value="Exonuc_VII_lsu_C"/>
</dbReference>
<dbReference type="InterPro" id="IPR025824">
    <property type="entry name" value="OB-fold_nuc-bd_dom"/>
</dbReference>
<dbReference type="NCBIfam" id="TIGR00237">
    <property type="entry name" value="xseA"/>
    <property type="match status" value="1"/>
</dbReference>
<dbReference type="PANTHER" id="PTHR30008">
    <property type="entry name" value="EXODEOXYRIBONUCLEASE 7 LARGE SUBUNIT"/>
    <property type="match status" value="1"/>
</dbReference>
<dbReference type="PANTHER" id="PTHR30008:SF0">
    <property type="entry name" value="EXODEOXYRIBONUCLEASE 7 LARGE SUBUNIT"/>
    <property type="match status" value="1"/>
</dbReference>
<dbReference type="Pfam" id="PF02601">
    <property type="entry name" value="Exonuc_VII_L"/>
    <property type="match status" value="2"/>
</dbReference>
<dbReference type="Pfam" id="PF13742">
    <property type="entry name" value="tRNA_anti_2"/>
    <property type="match status" value="1"/>
</dbReference>
<reference key="1">
    <citation type="journal article" date="2002" name="Proc. Natl. Acad. Sci. U.S.A.">
        <title>The genome sequence of the facultative intracellular pathogen Brucella melitensis.</title>
        <authorList>
            <person name="DelVecchio V.G."/>
            <person name="Kapatral V."/>
            <person name="Redkar R.J."/>
            <person name="Patra G."/>
            <person name="Mujer C."/>
            <person name="Los T."/>
            <person name="Ivanova N."/>
            <person name="Anderson I."/>
            <person name="Bhattacharyya A."/>
            <person name="Lykidis A."/>
            <person name="Reznik G."/>
            <person name="Jablonski L."/>
            <person name="Larsen N."/>
            <person name="D'Souza M."/>
            <person name="Bernal A."/>
            <person name="Mazur M."/>
            <person name="Goltsman E."/>
            <person name="Selkov E."/>
            <person name="Elzer P.H."/>
            <person name="Hagius S."/>
            <person name="O'Callaghan D."/>
            <person name="Letesson J.-J."/>
            <person name="Haselkorn R."/>
            <person name="Kyrpides N.C."/>
            <person name="Overbeek R."/>
        </authorList>
    </citation>
    <scope>NUCLEOTIDE SEQUENCE [LARGE SCALE GENOMIC DNA]</scope>
    <source>
        <strain>ATCC 23456 / CCUG 17765 / NCTC 10094 / 16M</strain>
    </source>
</reference>
<feature type="chain" id="PRO_0000197830" description="Exodeoxyribonuclease 7 large subunit">
    <location>
        <begin position="1"/>
        <end position="511"/>
    </location>
</feature>
<accession>Q8YCK1</accession>
<sequence length="511" mass="56333">MASDSSFPGASSNVAEYSVSEISGALKRTVEDTFGHVRVRGEISGYRGPHSSGHAYFALKDDRARLEAVIWRGSMSRLRFRPEEGMEVIATGKLTTYPGSSKYQIVIEQMEPAGAGALMALLEERKQRLAAEGLFDPALKQLLPFMPRVIGVVTSPTGAVIRDIIHRISDRYPLRVIVWPVRVQGDTCGPEVATAVNGFNTLPDDGPIPRPDVLIVARGGGSLEDLWGFNDEIVVRAVAASHIPVISAVGHETDWTLIDLAADMRAPTPTGAAEMAVPVKADLQASLASQSARLSSAMSRFFDQKRQAHRAAARAMPSADQLLALPRRRFDEAASRLTRALFVNTQKKRVHFDGHARQLSPRLLQRRLVELERGVTMLGQRLPRALEAFLRERRTAFTHRANRLSPEPILRRTRLTGSTLEQLDRRRDQAVRLLIERVKRRSQELDRLMRTLSYESVLERGFAVVFDAQGKPVKQAAAVSPGDALSVRFRDGDVGVVARAGLTIPDPTKGQ</sequence>
<keyword id="KW-0963">Cytoplasm</keyword>
<keyword id="KW-0269">Exonuclease</keyword>
<keyword id="KW-0378">Hydrolase</keyword>
<keyword id="KW-0540">Nuclease</keyword>
<evidence type="ECO:0000255" key="1">
    <source>
        <dbReference type="HAMAP-Rule" id="MF_00378"/>
    </source>
</evidence>
<evidence type="ECO:0000305" key="2"/>
<proteinExistence type="inferred from homology"/>
<protein>
    <recommendedName>
        <fullName evidence="1">Exodeoxyribonuclease 7 large subunit</fullName>
        <ecNumber evidence="1">3.1.11.6</ecNumber>
    </recommendedName>
    <alternativeName>
        <fullName evidence="1">Exodeoxyribonuclease VII large subunit</fullName>
        <shortName evidence="1">Exonuclease VII large subunit</shortName>
    </alternativeName>
</protein>